<proteinExistence type="evidence at protein level"/>
<evidence type="ECO:0000250" key="1"/>
<evidence type="ECO:0000255" key="2"/>
<evidence type="ECO:0000256" key="3">
    <source>
        <dbReference type="SAM" id="MobiDB-lite"/>
    </source>
</evidence>
<evidence type="ECO:0000269" key="4">
    <source>
    </source>
</evidence>
<evidence type="ECO:0000269" key="5">
    <source>
    </source>
</evidence>
<evidence type="ECO:0000269" key="6">
    <source>
    </source>
</evidence>
<evidence type="ECO:0000303" key="7">
    <source>
    </source>
</evidence>
<evidence type="ECO:0000305" key="8"/>
<evidence type="ECO:0000305" key="9">
    <source>
    </source>
</evidence>
<evidence type="ECO:0000305" key="10">
    <source>
    </source>
</evidence>
<accession>Q8MM62</accession>
<accession>Q552E1</accession>
<name>PDE6_DICDI</name>
<gene>
    <name type="primary">pdeE</name>
    <name type="synonym">gbpB</name>
    <name type="synonym">pde6</name>
    <name type="ORF">DDB_G0276027</name>
</gene>
<protein>
    <recommendedName>
        <fullName>cAMP/cGMP-dependent 3',5'-cAMP/cGMP phosphodiesterase B</fullName>
        <ecNumber evidence="6">3.1.4.35</ecNumber>
        <ecNumber evidence="6">3.1.4.53</ecNumber>
    </recommendedName>
    <alternativeName>
        <fullName>Cyclic GMP-binding protein B</fullName>
    </alternativeName>
    <alternativeName>
        <fullName>Phosphodiesterase 6</fullName>
        <shortName>DdPDE6</shortName>
    </alternativeName>
    <alternativeName>
        <fullName evidence="7">Phosphodiesterase E</fullName>
        <shortName evidence="7">PdeE</shortName>
    </alternativeName>
</protein>
<comment type="function">
    <text evidence="4 5 6">Dual specificity cAMP and cGMP phosphodiesterase with marked preference for cyclic AMP, which is activated by cAMP and cGMP. Likely functions as a cAMP-stimulated cAMP-phosphodiesterase which may play a role in regulating the cAMP relay response.</text>
</comment>
<comment type="catalytic activity">
    <reaction evidence="6">
        <text>3',5'-cyclic AMP + H2O = AMP + H(+)</text>
        <dbReference type="Rhea" id="RHEA:25277"/>
        <dbReference type="ChEBI" id="CHEBI:15377"/>
        <dbReference type="ChEBI" id="CHEBI:15378"/>
        <dbReference type="ChEBI" id="CHEBI:58165"/>
        <dbReference type="ChEBI" id="CHEBI:456215"/>
        <dbReference type="EC" id="3.1.4.53"/>
    </reaction>
    <physiologicalReaction direction="left-to-right" evidence="6">
        <dbReference type="Rhea" id="RHEA:25278"/>
    </physiologicalReaction>
</comment>
<comment type="catalytic activity">
    <reaction evidence="6">
        <text>3',5'-cyclic GMP + H2O = GMP + H(+)</text>
        <dbReference type="Rhea" id="RHEA:16957"/>
        <dbReference type="ChEBI" id="CHEBI:15377"/>
        <dbReference type="ChEBI" id="CHEBI:15378"/>
        <dbReference type="ChEBI" id="CHEBI:57746"/>
        <dbReference type="ChEBI" id="CHEBI:58115"/>
        <dbReference type="EC" id="3.1.4.35"/>
    </reaction>
</comment>
<comment type="cofactor">
    <cofactor evidence="6">
        <name>Mn(2+)</name>
        <dbReference type="ChEBI" id="CHEBI:29035"/>
    </cofactor>
    <cofactor evidence="6">
        <name>Mg(2+)</name>
        <dbReference type="ChEBI" id="CHEBI:18420"/>
    </cofactor>
    <cofactor evidence="6">
        <name>Zn(2+)</name>
        <dbReference type="ChEBI" id="CHEBI:29105"/>
    </cofactor>
    <text evidence="6">Divalent metal cation. Can use Mn(2+) or, to a lower extent, Mg(2+) or Zn(2+). Half-maximal activation occurs between 10 and 100 uM of Mn(2+) whereas maximal activation occurs with 10 mM of Zn(2+) or Mg(2+).</text>
</comment>
<comment type="biophysicochemical properties">
    <kinetics>
        <KM evidence="4 5">200 uM for cAMP</KM>
        <KM evidence="4 5">800 uM for cGMP</KM>
        <Vmax evidence="4 5">650.0 nmol/min/mg enzyme with cAMP as substrate</Vmax>
        <Vmax evidence="4 5">300.0 nmol/min/mg enzyme with cGMP as substrate</Vmax>
        <text>cAMP/cGMP selectivity of 9.</text>
    </kinetics>
    <phDependence>
        <text evidence="4 5 6">Optimum pH is 7.0.</text>
    </phDependence>
</comment>
<comment type="subcellular location">
    <subcellularLocation>
        <location evidence="9 10">Cytoplasm</location>
        <location evidence="9 10">Cytosol</location>
    </subcellularLocation>
</comment>
<comment type="developmental stage">
    <text evidence="4 5 6">Low expression during growth. Mainly expressed after 8-10 hours of starvation when cells are aggregating and in the multicellular stage.</text>
</comment>
<comment type="domain">
    <text evidence="1">The beta lactamase-like domain catalyzes the hydrolysis of cGMP.</text>
</comment>
<comment type="similarity">
    <text evidence="8">Belongs to the metallo-beta-lactamase superfamily. cNMP phosphodiesterase family.</text>
</comment>
<organism>
    <name type="scientific">Dictyostelium discoideum</name>
    <name type="common">Social amoeba</name>
    <dbReference type="NCBI Taxonomy" id="44689"/>
    <lineage>
        <taxon>Eukaryota</taxon>
        <taxon>Amoebozoa</taxon>
        <taxon>Evosea</taxon>
        <taxon>Eumycetozoa</taxon>
        <taxon>Dictyostelia</taxon>
        <taxon>Dictyosteliales</taxon>
        <taxon>Dictyosteliaceae</taxon>
        <taxon>Dictyostelium</taxon>
    </lineage>
</organism>
<dbReference type="EC" id="3.1.4.35" evidence="6"/>
<dbReference type="EC" id="3.1.4.53" evidence="6"/>
<dbReference type="EMBL" id="AF481922">
    <property type="protein sequence ID" value="AAM34040.1"/>
    <property type="molecule type" value="Genomic_DNA"/>
</dbReference>
<dbReference type="EMBL" id="AY047364">
    <property type="protein sequence ID" value="AAL06060.1"/>
    <property type="molecule type" value="Genomic_DNA"/>
</dbReference>
<dbReference type="EMBL" id="AAFI02000014">
    <property type="protein sequence ID" value="EAL69313.1"/>
    <property type="molecule type" value="Genomic_DNA"/>
</dbReference>
<dbReference type="RefSeq" id="XP_643272.1">
    <property type="nucleotide sequence ID" value="XM_638180.1"/>
</dbReference>
<dbReference type="SMR" id="Q8MM62"/>
<dbReference type="FunCoup" id="Q8MM62">
    <property type="interactions" value="121"/>
</dbReference>
<dbReference type="STRING" id="44689.Q8MM62"/>
<dbReference type="PaxDb" id="44689-DDB0185220"/>
<dbReference type="EnsemblProtists" id="EAL69313">
    <property type="protein sequence ID" value="EAL69313"/>
    <property type="gene ID" value="DDB_G0276027"/>
</dbReference>
<dbReference type="GeneID" id="8620315"/>
<dbReference type="KEGG" id="ddi:DDB_G0276027"/>
<dbReference type="dictyBase" id="DDB_G0276027">
    <property type="gene designation" value="pdeE"/>
</dbReference>
<dbReference type="VEuPathDB" id="AmoebaDB:DDB_G0276027"/>
<dbReference type="eggNOG" id="ENOG502R2P1">
    <property type="taxonomic scope" value="Eukaryota"/>
</dbReference>
<dbReference type="HOGENOM" id="CLU_283926_0_0_1"/>
<dbReference type="InParanoid" id="Q8MM62"/>
<dbReference type="OMA" id="MIIHESG"/>
<dbReference type="SABIO-RK" id="Q8MM62"/>
<dbReference type="PRO" id="PR:Q8MM62"/>
<dbReference type="Proteomes" id="UP000002195">
    <property type="component" value="Chromosome 2"/>
</dbReference>
<dbReference type="GO" id="GO:0005952">
    <property type="term" value="C:cAMP-dependent protein kinase complex"/>
    <property type="evidence" value="ECO:0000318"/>
    <property type="project" value="GO_Central"/>
</dbReference>
<dbReference type="GO" id="GO:0005829">
    <property type="term" value="C:cytosol"/>
    <property type="evidence" value="ECO:0000314"/>
    <property type="project" value="dictyBase"/>
</dbReference>
<dbReference type="GO" id="GO:0004115">
    <property type="term" value="F:3',5'-cyclic-AMP phosphodiesterase activity"/>
    <property type="evidence" value="ECO:0000314"/>
    <property type="project" value="dictyBase"/>
</dbReference>
<dbReference type="GO" id="GO:0047555">
    <property type="term" value="F:3',5'-cyclic-GMP phosphodiesterase activity"/>
    <property type="evidence" value="ECO:0000314"/>
    <property type="project" value="dictyBase"/>
</dbReference>
<dbReference type="GO" id="GO:0030552">
    <property type="term" value="F:cAMP binding"/>
    <property type="evidence" value="ECO:0000318"/>
    <property type="project" value="GO_Central"/>
</dbReference>
<dbReference type="GO" id="GO:0004862">
    <property type="term" value="F:cAMP-dependent protein kinase inhibitor activity"/>
    <property type="evidence" value="ECO:0000318"/>
    <property type="project" value="GO_Central"/>
</dbReference>
<dbReference type="GO" id="GO:0030553">
    <property type="term" value="F:cGMP binding"/>
    <property type="evidence" value="ECO:0007669"/>
    <property type="project" value="UniProtKB-KW"/>
</dbReference>
<dbReference type="GO" id="GO:0046872">
    <property type="term" value="F:metal ion binding"/>
    <property type="evidence" value="ECO:0007669"/>
    <property type="project" value="UniProtKB-KW"/>
</dbReference>
<dbReference type="GO" id="GO:0034236">
    <property type="term" value="F:protein kinase A catalytic subunit binding"/>
    <property type="evidence" value="ECO:0000318"/>
    <property type="project" value="GO_Central"/>
</dbReference>
<dbReference type="GO" id="GO:0140582">
    <property type="term" value="P:adenylate cyclase-activating G protein-coupled cAMP receptor signaling pathway"/>
    <property type="evidence" value="ECO:0000315"/>
    <property type="project" value="dictyBase"/>
</dbReference>
<dbReference type="GO" id="GO:0007189">
    <property type="term" value="P:adenylate cyclase-activating G protein-coupled receptor signaling pathway"/>
    <property type="evidence" value="ECO:0000318"/>
    <property type="project" value="GO_Central"/>
</dbReference>
<dbReference type="GO" id="GO:0019933">
    <property type="term" value="P:cAMP-mediated signaling"/>
    <property type="evidence" value="ECO:0000314"/>
    <property type="project" value="dictyBase"/>
</dbReference>
<dbReference type="GO" id="GO:0019934">
    <property type="term" value="P:cGMP-mediated signaling"/>
    <property type="evidence" value="ECO:0000315"/>
    <property type="project" value="dictyBase"/>
</dbReference>
<dbReference type="GO" id="GO:0072697">
    <property type="term" value="P:protein localization to cell cortex"/>
    <property type="evidence" value="ECO:0000316"/>
    <property type="project" value="dictyBase"/>
</dbReference>
<dbReference type="GO" id="GO:0061120">
    <property type="term" value="P:regulation of positive chemotaxis to cAMP by DIF-1"/>
    <property type="evidence" value="ECO:0000315"/>
    <property type="project" value="dictyBase"/>
</dbReference>
<dbReference type="CDD" id="cd00038">
    <property type="entry name" value="CAP_ED"/>
    <property type="match status" value="2"/>
</dbReference>
<dbReference type="CDD" id="cd07738">
    <property type="entry name" value="DdPDE5-like_MBL-fold"/>
    <property type="match status" value="1"/>
</dbReference>
<dbReference type="FunFam" id="2.60.120.10:FF:000503">
    <property type="entry name" value="cAMP/cGMP-dependent 3',5'-cAMP/cGMP phosphodiesterase B"/>
    <property type="match status" value="1"/>
</dbReference>
<dbReference type="FunFam" id="3.60.15.10:FF:000029">
    <property type="entry name" value="Cyclic nucleotide-binding domain protein"/>
    <property type="match status" value="1"/>
</dbReference>
<dbReference type="Gene3D" id="2.60.120.10">
    <property type="entry name" value="Jelly Rolls"/>
    <property type="match status" value="2"/>
</dbReference>
<dbReference type="Gene3D" id="3.60.15.10">
    <property type="entry name" value="Ribonuclease Z/Hydroxyacylglutathione hydrolase-like"/>
    <property type="match status" value="1"/>
</dbReference>
<dbReference type="InterPro" id="IPR050503">
    <property type="entry name" value="cAMP-dep_PK_reg_su-like"/>
</dbReference>
<dbReference type="InterPro" id="IPR000595">
    <property type="entry name" value="cNMP-bd_dom"/>
</dbReference>
<dbReference type="InterPro" id="IPR018490">
    <property type="entry name" value="cNMP-bd_dom_sf"/>
</dbReference>
<dbReference type="InterPro" id="IPR001279">
    <property type="entry name" value="Metallo-B-lactamas"/>
</dbReference>
<dbReference type="InterPro" id="IPR036866">
    <property type="entry name" value="RibonucZ/Hydroxyglut_hydro"/>
</dbReference>
<dbReference type="InterPro" id="IPR014710">
    <property type="entry name" value="RmlC-like_jellyroll"/>
</dbReference>
<dbReference type="PANTHER" id="PTHR11635">
    <property type="entry name" value="CAMP-DEPENDENT PROTEIN KINASE REGULATORY CHAIN"/>
    <property type="match status" value="1"/>
</dbReference>
<dbReference type="PANTHER" id="PTHR11635:SF165">
    <property type="entry name" value="CAMP_CGMP-DEPENDENT 3',5'-CAMP_CGMP PHOSPHODIESTERASE B"/>
    <property type="match status" value="1"/>
</dbReference>
<dbReference type="Pfam" id="PF00027">
    <property type="entry name" value="cNMP_binding"/>
    <property type="match status" value="2"/>
</dbReference>
<dbReference type="Pfam" id="PF00753">
    <property type="entry name" value="Lactamase_B"/>
    <property type="match status" value="1"/>
</dbReference>
<dbReference type="SMART" id="SM00100">
    <property type="entry name" value="cNMP"/>
    <property type="match status" value="2"/>
</dbReference>
<dbReference type="SMART" id="SM00849">
    <property type="entry name" value="Lactamase_B"/>
    <property type="match status" value="1"/>
</dbReference>
<dbReference type="SUPFAM" id="SSF51206">
    <property type="entry name" value="cAMP-binding domain-like"/>
    <property type="match status" value="2"/>
</dbReference>
<dbReference type="SUPFAM" id="SSF56281">
    <property type="entry name" value="Metallo-hydrolase/oxidoreductase"/>
    <property type="match status" value="1"/>
</dbReference>
<dbReference type="PROSITE" id="PS50042">
    <property type="entry name" value="CNMP_BINDING_3"/>
    <property type="match status" value="2"/>
</dbReference>
<sequence>MNSKYGDNIIDFLRYLEKFVKSLTKDNKIEEFKTFDIKSLLYPRNKDYFGNLSKFLLAVISARIGSNFINEDDIFEISELLKEFLGQELEHLPYLSYEELYVEIVEQVGEINGTVSEIIEAITVTIDFLDTFEKVSQTIDRSNEKQKLLAYLSAPVNQLDNSVSGVFNENDYTDIQRFFTELTNENNQSPDSNISILINDFQSLLNILESQQASSSSSKMIINDSPRTQQRNGTTEQQKKQQQQQYLQKNKEPFYSKDKIMQVSGPSYVFTPSDCNVSIQVGIPPDTLKRDQSICHFIVPHFLISKDVSLSEVEFPIFYNKFVQKGKTKVVIICTVEQKQRIETILCESIFGPAPEHIYTDEEITIPDYKIDLLTERLAIDPRANDEKLDSYVIFKTFDTFGVVDIDLPSASDPTKLINLRIRNTKGLISFHEDYHVVQKQLHLKLQEQQQDQQDKSSSSTTDKQMINTSGNRIILKNNTVSVIDSTIESQYVPVLPFGNDHEQVKKFKAPILGVTFLGVSHGLDFTHCSHTTGFIIWINGSGVVVDPPVGNTTYLQTNGIYGKTVEHIILTHCHADHDSGILQKIIERNKVTLYTTKTINESYMRKLKALTGLPEQSLKNYYTWVPVTIGNKIKILGAEFEFDYSFHVIPTIRFKLEIYNKKISYSADTFYDLQKFKQLKDQGVLSKKRIERLKSFVFDADMIIHESGVAPIHTPMANLLELPSEIRKKIRVVHCSSSVDTKGEIIRPKEGLENTEIIKVDRKYKGVAECIQIQTALNHCSVFSKLSPAEVQRVFFLCKKIWVKRNDVIIKKGSPSDMFYIILSGKVLVYENEYEPIKSTTSVGTVVTDTTTITTTVKTDAIKIPTIKLCAGETLGESALQLDKNIDASATVIAETDVCLLVWKTMDLRTEFHSNLNTFISKVHMDLSHINSCRDAIIRAFQHNITQHINKEEVDSIANGSKDVSFAHHQVIFNEGDTSDSMYIIKQGRVRIHSKKNKNIIRYLNVGDFFGETAYRRSNEDSNFLPTRSFTATAIDPTILLKLDIESIVNPRIQNIIEQKAKKNAEDNIRYHAYSPKIRTPRTPRKVYPIEGLSI</sequence>
<feature type="chain" id="PRO_0000353106" description="cAMP/cGMP-dependent 3',5'-cAMP/cGMP phosphodiesterase B">
    <location>
        <begin position="1"/>
        <end position="1096"/>
    </location>
</feature>
<feature type="region of interest" description="Disordered" evidence="3">
    <location>
        <begin position="216"/>
        <end position="248"/>
    </location>
</feature>
<feature type="compositionally biased region" description="Polar residues" evidence="3">
    <location>
        <begin position="225"/>
        <end position="236"/>
    </location>
</feature>
<feature type="binding site" evidence="2">
    <location>
        <position position="573"/>
    </location>
    <ligand>
        <name>a divalent metal cation</name>
        <dbReference type="ChEBI" id="CHEBI:60240"/>
    </ligand>
</feature>
<feature type="binding site" evidence="2">
    <location>
        <position position="575"/>
    </location>
    <ligand>
        <name>a divalent metal cation</name>
        <dbReference type="ChEBI" id="CHEBI:60240"/>
    </ligand>
</feature>
<feature type="binding site" evidence="2">
    <location>
        <position position="577"/>
    </location>
    <ligand>
        <name>a divalent metal cation</name>
        <dbReference type="ChEBI" id="CHEBI:60240"/>
    </ligand>
</feature>
<feature type="binding site">
    <location>
        <begin position="783"/>
        <end position="930"/>
    </location>
    <ligand>
        <name>a nucleoside 3',5'-cyclic phosphate</name>
        <dbReference type="ChEBI" id="CHEBI:58464"/>
        <label>1</label>
    </ligand>
</feature>
<feature type="binding site">
    <location>
        <begin position="946"/>
        <end position="1070"/>
    </location>
    <ligand>
        <name>a nucleoside 3',5'-cyclic phosphate</name>
        <dbReference type="ChEBI" id="CHEBI:58464"/>
        <label>2</label>
    </ligand>
</feature>
<keyword id="KW-0114">cAMP</keyword>
<keyword id="KW-0116">cAMP-binding</keyword>
<keyword id="KW-0140">cGMP</keyword>
<keyword id="KW-0142">cGMP-binding</keyword>
<keyword id="KW-0963">Cytoplasm</keyword>
<keyword id="KW-0378">Hydrolase</keyword>
<keyword id="KW-0460">Magnesium</keyword>
<keyword id="KW-0464">Manganese</keyword>
<keyword id="KW-0479">Metal-binding</keyword>
<keyword id="KW-0547">Nucleotide-binding</keyword>
<keyword id="KW-1185">Reference proteome</keyword>
<keyword id="KW-0677">Repeat</keyword>
<keyword id="KW-0862">Zinc</keyword>
<reference key="1">
    <citation type="journal article" date="2002" name="Proc. Natl. Acad. Sci. U.S.A.">
        <title>Identification of four candidate cGMP targets in Dictyostelium.</title>
        <authorList>
            <person name="Goldberg J.M."/>
            <person name="Bosgraaf L."/>
            <person name="Van Haastert P.J.M."/>
            <person name="Smith J.L."/>
        </authorList>
    </citation>
    <scope>NUCLEOTIDE SEQUENCE [GENOMIC DNA]</scope>
</reference>
<reference key="2">
    <citation type="journal article" date="2003" name="J. Biol. Chem.">
        <title>Characterization of a cAMP-stimulated cAMP phosphodiesterase in Dictyostelium discoideum.</title>
        <authorList>
            <person name="Meima M.E."/>
            <person name="Weening K.E."/>
            <person name="Schaap P."/>
        </authorList>
    </citation>
    <scope>NUCLEOTIDE SEQUENCE [GENOMIC DNA]</scope>
    <scope>FUNCTION</scope>
    <scope>CATALYTIC ACTIVITY</scope>
    <scope>BIOPHYSICOCHEMICAL PROPERTIES</scope>
    <scope>DEVELOPMENTAL STAGE</scope>
    <scope>COFACTOR</scope>
</reference>
<reference key="3">
    <citation type="journal article" date="2002" name="Nature">
        <title>Sequence and analysis of chromosome 2 of Dictyostelium discoideum.</title>
        <authorList>
            <person name="Gloeckner G."/>
            <person name="Eichinger L."/>
            <person name="Szafranski K."/>
            <person name="Pachebat J.A."/>
            <person name="Bankier A.T."/>
            <person name="Dear P.H."/>
            <person name="Lehmann R."/>
            <person name="Baumgart C."/>
            <person name="Parra G."/>
            <person name="Abril J.F."/>
            <person name="Guigo R."/>
            <person name="Kumpf K."/>
            <person name="Tunggal B."/>
            <person name="Cox E.C."/>
            <person name="Quail M.A."/>
            <person name="Platzer M."/>
            <person name="Rosenthal A."/>
            <person name="Noegel A.A."/>
        </authorList>
    </citation>
    <scope>NUCLEOTIDE SEQUENCE [LARGE SCALE GENOMIC DNA]</scope>
    <source>
        <strain>AX4</strain>
    </source>
</reference>
<reference key="4">
    <citation type="journal article" date="2005" name="Nature">
        <title>The genome of the social amoeba Dictyostelium discoideum.</title>
        <authorList>
            <person name="Eichinger L."/>
            <person name="Pachebat J.A."/>
            <person name="Gloeckner G."/>
            <person name="Rajandream M.A."/>
            <person name="Sucgang R."/>
            <person name="Berriman M."/>
            <person name="Song J."/>
            <person name="Olsen R."/>
            <person name="Szafranski K."/>
            <person name="Xu Q."/>
            <person name="Tunggal B."/>
            <person name="Kummerfeld S."/>
            <person name="Madera M."/>
            <person name="Konfortov B.A."/>
            <person name="Rivero F."/>
            <person name="Bankier A.T."/>
            <person name="Lehmann R."/>
            <person name="Hamlin N."/>
            <person name="Davies R."/>
            <person name="Gaudet P."/>
            <person name="Fey P."/>
            <person name="Pilcher K."/>
            <person name="Chen G."/>
            <person name="Saunders D."/>
            <person name="Sodergren E.J."/>
            <person name="Davis P."/>
            <person name="Kerhornou A."/>
            <person name="Nie X."/>
            <person name="Hall N."/>
            <person name="Anjard C."/>
            <person name="Hemphill L."/>
            <person name="Bason N."/>
            <person name="Farbrother P."/>
            <person name="Desany B."/>
            <person name="Just E."/>
            <person name="Morio T."/>
            <person name="Rost R."/>
            <person name="Churcher C.M."/>
            <person name="Cooper J."/>
            <person name="Haydock S."/>
            <person name="van Driessche N."/>
            <person name="Cronin A."/>
            <person name="Goodhead I."/>
            <person name="Muzny D.M."/>
            <person name="Mourier T."/>
            <person name="Pain A."/>
            <person name="Lu M."/>
            <person name="Harper D."/>
            <person name="Lindsay R."/>
            <person name="Hauser H."/>
            <person name="James K.D."/>
            <person name="Quiles M."/>
            <person name="Madan Babu M."/>
            <person name="Saito T."/>
            <person name="Buchrieser C."/>
            <person name="Wardroper A."/>
            <person name="Felder M."/>
            <person name="Thangavelu M."/>
            <person name="Johnson D."/>
            <person name="Knights A."/>
            <person name="Loulseged H."/>
            <person name="Mungall K.L."/>
            <person name="Oliver K."/>
            <person name="Price C."/>
            <person name="Quail M.A."/>
            <person name="Urushihara H."/>
            <person name="Hernandez J."/>
            <person name="Rabbinowitsch E."/>
            <person name="Steffen D."/>
            <person name="Sanders M."/>
            <person name="Ma J."/>
            <person name="Kohara Y."/>
            <person name="Sharp S."/>
            <person name="Simmonds M.N."/>
            <person name="Spiegler S."/>
            <person name="Tivey A."/>
            <person name="Sugano S."/>
            <person name="White B."/>
            <person name="Walker D."/>
            <person name="Woodward J.R."/>
            <person name="Winckler T."/>
            <person name="Tanaka Y."/>
            <person name="Shaulsky G."/>
            <person name="Schleicher M."/>
            <person name="Weinstock G.M."/>
            <person name="Rosenthal A."/>
            <person name="Cox E.C."/>
            <person name="Chisholm R.L."/>
            <person name="Gibbs R.A."/>
            <person name="Loomis W.F."/>
            <person name="Platzer M."/>
            <person name="Kay R.R."/>
            <person name="Williams J.G."/>
            <person name="Dear P.H."/>
            <person name="Noegel A.A."/>
            <person name="Barrell B.G."/>
            <person name="Kuspa A."/>
        </authorList>
    </citation>
    <scope>NUCLEOTIDE SEQUENCE [LARGE SCALE GENOMIC DNA]</scope>
    <source>
        <strain>AX4</strain>
    </source>
</reference>
<reference key="5">
    <citation type="journal article" date="2002" name="EMBO J.">
        <title>A novel cGMP signalling pathway mediating myosin phosphorylation and chemotaxis in Dictyostelium.</title>
        <authorList>
            <person name="Bosgraaf L."/>
            <person name="Russcher H."/>
            <person name="Smith J.L."/>
            <person name="Wessels D."/>
            <person name="Soll D.R."/>
            <person name="Van Haastert P.J.M."/>
        </authorList>
    </citation>
    <scope>FUNCTION</scope>
    <scope>SUBCELLULAR LOCATION</scope>
    <scope>BIOPHYSICOCHEMICAL PROPERTIES</scope>
    <scope>DEVELOPMENTAL STAGE</scope>
</reference>
<reference key="6">
    <citation type="journal article" date="2002" name="Mol. Biol. Cell">
        <title>Identification and characterization of two unusual cGMP-stimulated phosphodiesterases in dictyostelium.</title>
        <authorList>
            <person name="Bosgraaf L."/>
            <person name="Russcher H."/>
            <person name="Snippe H."/>
            <person name="Bader S."/>
            <person name="Wind J."/>
            <person name="Van Haastert P.J.M."/>
        </authorList>
    </citation>
    <scope>FUNCTION</scope>
    <scope>BIOPHYSICOCHEMICAL PROPERTIES</scope>
    <scope>DEVELOPMENTAL STAGE</scope>
</reference>
<reference key="7">
    <citation type="journal article" date="2007" name="Biochem. J.">
        <title>Seven Dictyostelium discoideum phosphodiesterases degrade three pools of cAMP and cGMP.</title>
        <authorList>
            <person name="Bader S."/>
            <person name="Kortholt A."/>
            <person name="Van Haastert P.J.M."/>
        </authorList>
    </citation>
    <scope>SUBCELLULAR LOCATION</scope>
</reference>